<protein>
    <recommendedName>
        <fullName evidence="1">tRNA 5-methylaminomethyl-2-thiouridine biosynthesis bifunctional protein MnmC</fullName>
        <shortName evidence="1">tRNA mnm(5)s(2)U biosynthesis bifunctional protein</shortName>
    </recommendedName>
    <domain>
        <recommendedName>
            <fullName evidence="1">tRNA (mnm(5)s(2)U34)-methyltransferase</fullName>
            <ecNumber evidence="1">2.1.1.61</ecNumber>
        </recommendedName>
    </domain>
    <domain>
        <recommendedName>
            <fullName evidence="1">FAD-dependent cmnm(5)s(2)U34 oxidoreductase</fullName>
            <ecNumber evidence="1">1.5.-.-</ecNumber>
        </recommendedName>
    </domain>
</protein>
<evidence type="ECO:0000255" key="1">
    <source>
        <dbReference type="HAMAP-Rule" id="MF_01102"/>
    </source>
</evidence>
<evidence type="ECO:0000305" key="2"/>
<gene>
    <name evidence="1" type="primary">mnmC</name>
    <name type="ordered locus">SCH_2381</name>
</gene>
<comment type="function">
    <text evidence="1">Catalyzes the last two steps in the biosynthesis of 5-methylaminomethyl-2-thiouridine (mnm(5)s(2)U) at the wobble position (U34) in tRNA. Catalyzes the FAD-dependent demodification of cmnm(5)s(2)U34 to nm(5)s(2)U34, followed by the transfer of a methyl group from S-adenosyl-L-methionine to nm(5)s(2)U34, to form mnm(5)s(2)U34.</text>
</comment>
<comment type="catalytic activity">
    <reaction evidence="1">
        <text>5-aminomethyl-2-thiouridine(34) in tRNA + S-adenosyl-L-methionine = 5-methylaminomethyl-2-thiouridine(34) in tRNA + S-adenosyl-L-homocysteine + H(+)</text>
        <dbReference type="Rhea" id="RHEA:19569"/>
        <dbReference type="Rhea" id="RHEA-COMP:10195"/>
        <dbReference type="Rhea" id="RHEA-COMP:10197"/>
        <dbReference type="ChEBI" id="CHEBI:15378"/>
        <dbReference type="ChEBI" id="CHEBI:57856"/>
        <dbReference type="ChEBI" id="CHEBI:59789"/>
        <dbReference type="ChEBI" id="CHEBI:74454"/>
        <dbReference type="ChEBI" id="CHEBI:74455"/>
        <dbReference type="EC" id="2.1.1.61"/>
    </reaction>
</comment>
<comment type="cofactor">
    <cofactor evidence="1">
        <name>FAD</name>
        <dbReference type="ChEBI" id="CHEBI:57692"/>
    </cofactor>
</comment>
<comment type="subcellular location">
    <subcellularLocation>
        <location evidence="1">Cytoplasm</location>
    </subcellularLocation>
</comment>
<comment type="similarity">
    <text evidence="1">In the N-terminal section; belongs to the methyltransferase superfamily. tRNA (mnm(5)s(2)U34)-methyltransferase family.</text>
</comment>
<comment type="similarity">
    <text evidence="1">In the C-terminal section; belongs to the DAO family.</text>
</comment>
<comment type="sequence caution" evidence="2">
    <conflict type="erroneous initiation">
        <sequence resource="EMBL-CDS" id="AAX66287"/>
    </conflict>
</comment>
<keyword id="KW-0963">Cytoplasm</keyword>
<keyword id="KW-0274">FAD</keyword>
<keyword id="KW-0285">Flavoprotein</keyword>
<keyword id="KW-0489">Methyltransferase</keyword>
<keyword id="KW-0511">Multifunctional enzyme</keyword>
<keyword id="KW-0560">Oxidoreductase</keyword>
<keyword id="KW-0949">S-adenosyl-L-methionine</keyword>
<keyword id="KW-0808">Transferase</keyword>
<keyword id="KW-0819">tRNA processing</keyword>
<reference key="1">
    <citation type="journal article" date="2005" name="Nucleic Acids Res.">
        <title>The genome sequence of Salmonella enterica serovar Choleraesuis, a highly invasive and resistant zoonotic pathogen.</title>
        <authorList>
            <person name="Chiu C.-H."/>
            <person name="Tang P."/>
            <person name="Chu C."/>
            <person name="Hu S."/>
            <person name="Bao Q."/>
            <person name="Yu J."/>
            <person name="Chou Y.-Y."/>
            <person name="Wang H.-S."/>
            <person name="Lee Y.-S."/>
        </authorList>
    </citation>
    <scope>NUCLEOTIDE SEQUENCE [LARGE SCALE GENOMIC DNA]</scope>
    <source>
        <strain>SC-B67</strain>
    </source>
</reference>
<proteinExistence type="inferred from homology"/>
<sequence>MKQYAIQPATLEFNAEGTPVSRDFDDVYFSNDNGLEETRYVFLGGNRLAERFPVHSHPLFIVAESGFGTGLNFLTLWQAFDSFRSAHPQATLQRLHFISFEKFPLTRDDLALAHQHWPELAPWAEQLQAQWPLPLPGCHRLLLDRSRVTLDLWFGDINELTDQLDATLNQTVDAWFLDGFAPAKNPDMWTPNLFNAMARLARPGATLATFTSAGFVRRGLQEAGFTMQKRKGFGRKREMLCGVMEQHLMPTLYAPWFYRSGSEKRETAIIGGGIASALLSLALLRRGWQVTLYCADDQPAQGASGNRQGALYPLLSKHDAAINRFFPTAFTFARRLYDALPVSFDHDWCGVTQLGWDEKSQQKIAQMLSLALPAELASALNAEEAEQAVGVTTRCGGITYPAGGWLCPEQLTRAVIALATEQGLQTRFRHTLTSLVAQESRWQLRFMSGETASHETVVLANGHQINRFDQTRPLPVYAVGGQVSHIPTTPALSALRQVLCYDGYLTPQNPHNQQHCIGASYHRGDESTVWREEDQRQNRQRLLDCFPDAKWATEVDVSGNSARCGVRCATRDHLPMVGNVPDYHATLTHYADLADNKTSAAPAPVYPGLFVLGALGSRGLCSAPLCAEILAAQMSNEPIPLDAGTLAALNPNRLWVRKLLKGKAVK</sequence>
<organism>
    <name type="scientific">Salmonella choleraesuis (strain SC-B67)</name>
    <dbReference type="NCBI Taxonomy" id="321314"/>
    <lineage>
        <taxon>Bacteria</taxon>
        <taxon>Pseudomonadati</taxon>
        <taxon>Pseudomonadota</taxon>
        <taxon>Gammaproteobacteria</taxon>
        <taxon>Enterobacterales</taxon>
        <taxon>Enterobacteriaceae</taxon>
        <taxon>Salmonella</taxon>
    </lineage>
</organism>
<name>MNMC_SALCH</name>
<dbReference type="EC" id="2.1.1.61" evidence="1"/>
<dbReference type="EC" id="1.5.-.-" evidence="1"/>
<dbReference type="EMBL" id="AE017220">
    <property type="protein sequence ID" value="AAX66287.1"/>
    <property type="status" value="ALT_INIT"/>
    <property type="molecule type" value="Genomic_DNA"/>
</dbReference>
<dbReference type="SMR" id="Q57LX5"/>
<dbReference type="KEGG" id="sec:SCH_2381"/>
<dbReference type="HOGENOM" id="CLU_022427_1_0_6"/>
<dbReference type="Proteomes" id="UP000000538">
    <property type="component" value="Chromosome"/>
</dbReference>
<dbReference type="GO" id="GO:0005737">
    <property type="term" value="C:cytoplasm"/>
    <property type="evidence" value="ECO:0007669"/>
    <property type="project" value="UniProtKB-SubCell"/>
</dbReference>
<dbReference type="GO" id="GO:0050660">
    <property type="term" value="F:flavin adenine dinucleotide binding"/>
    <property type="evidence" value="ECO:0007669"/>
    <property type="project" value="UniProtKB-UniRule"/>
</dbReference>
<dbReference type="GO" id="GO:0016645">
    <property type="term" value="F:oxidoreductase activity, acting on the CH-NH group of donors"/>
    <property type="evidence" value="ECO:0007669"/>
    <property type="project" value="InterPro"/>
</dbReference>
<dbReference type="GO" id="GO:0004808">
    <property type="term" value="F:tRNA (5-methylaminomethyl-2-thiouridylate)(34)-methyltransferase activity"/>
    <property type="evidence" value="ECO:0007669"/>
    <property type="project" value="UniProtKB-EC"/>
</dbReference>
<dbReference type="GO" id="GO:0032259">
    <property type="term" value="P:methylation"/>
    <property type="evidence" value="ECO:0007669"/>
    <property type="project" value="UniProtKB-KW"/>
</dbReference>
<dbReference type="GO" id="GO:0002098">
    <property type="term" value="P:tRNA wobble uridine modification"/>
    <property type="evidence" value="ECO:0007669"/>
    <property type="project" value="TreeGrafter"/>
</dbReference>
<dbReference type="FunFam" id="3.40.50.150:FF:000107">
    <property type="entry name" value="tRNA 5-methylaminomethyl-2-thiouridine biosynthesis bifunctional protein MnmC"/>
    <property type="match status" value="1"/>
</dbReference>
<dbReference type="Gene3D" id="3.30.9.10">
    <property type="entry name" value="D-Amino Acid Oxidase, subunit A, domain 2"/>
    <property type="match status" value="1"/>
</dbReference>
<dbReference type="Gene3D" id="3.50.50.60">
    <property type="entry name" value="FAD/NAD(P)-binding domain"/>
    <property type="match status" value="1"/>
</dbReference>
<dbReference type="Gene3D" id="3.40.50.150">
    <property type="entry name" value="Vaccinia Virus protein VP39"/>
    <property type="match status" value="1"/>
</dbReference>
<dbReference type="HAMAP" id="MF_01102">
    <property type="entry name" value="MnmC"/>
    <property type="match status" value="1"/>
</dbReference>
<dbReference type="InterPro" id="IPR006076">
    <property type="entry name" value="FAD-dep_OxRdtase"/>
</dbReference>
<dbReference type="InterPro" id="IPR036188">
    <property type="entry name" value="FAD/NAD-bd_sf"/>
</dbReference>
<dbReference type="InterPro" id="IPR008471">
    <property type="entry name" value="MnmC-like_methylTransf"/>
</dbReference>
<dbReference type="InterPro" id="IPR029063">
    <property type="entry name" value="SAM-dependent_MTases_sf"/>
</dbReference>
<dbReference type="InterPro" id="IPR023032">
    <property type="entry name" value="tRNA_MAMT_biosynth_bifunc_MnmC"/>
</dbReference>
<dbReference type="InterPro" id="IPR047785">
    <property type="entry name" value="tRNA_MNMC2"/>
</dbReference>
<dbReference type="InterPro" id="IPR017610">
    <property type="entry name" value="tRNA_S-uridine_synth_MnmC_C"/>
</dbReference>
<dbReference type="NCBIfam" id="TIGR03197">
    <property type="entry name" value="MnmC_Cterm"/>
    <property type="match status" value="1"/>
</dbReference>
<dbReference type="NCBIfam" id="NF002480">
    <property type="entry name" value="PRK01747.1-1"/>
    <property type="match status" value="1"/>
</dbReference>
<dbReference type="NCBIfam" id="NF002481">
    <property type="entry name" value="PRK01747.1-2"/>
    <property type="match status" value="1"/>
</dbReference>
<dbReference type="NCBIfam" id="NF002482">
    <property type="entry name" value="PRK01747.1-3"/>
    <property type="match status" value="1"/>
</dbReference>
<dbReference type="NCBIfam" id="NF002484">
    <property type="entry name" value="PRK01747.1-5"/>
    <property type="match status" value="1"/>
</dbReference>
<dbReference type="NCBIfam" id="NF033855">
    <property type="entry name" value="tRNA_MNMC2"/>
    <property type="match status" value="1"/>
</dbReference>
<dbReference type="PANTHER" id="PTHR13847">
    <property type="entry name" value="SARCOSINE DEHYDROGENASE-RELATED"/>
    <property type="match status" value="1"/>
</dbReference>
<dbReference type="PANTHER" id="PTHR13847:SF283">
    <property type="entry name" value="TRNA 5-METHYLAMINOMETHYL-2-THIOURIDINE BIOSYNTHESIS BIFUNCTIONAL PROTEIN MNMC"/>
    <property type="match status" value="1"/>
</dbReference>
<dbReference type="Pfam" id="PF01266">
    <property type="entry name" value="DAO"/>
    <property type="match status" value="1"/>
</dbReference>
<dbReference type="Pfam" id="PF05430">
    <property type="entry name" value="Methyltransf_30"/>
    <property type="match status" value="1"/>
</dbReference>
<dbReference type="SUPFAM" id="SSF51905">
    <property type="entry name" value="FAD/NAD(P)-binding domain"/>
    <property type="match status" value="1"/>
</dbReference>
<feature type="chain" id="PRO_0000348021" description="tRNA 5-methylaminomethyl-2-thiouridine biosynthesis bifunctional protein MnmC">
    <location>
        <begin position="1"/>
        <end position="666"/>
    </location>
</feature>
<feature type="region of interest" description="tRNA (mnm(5)s(2)U34)-methyltransferase">
    <location>
        <begin position="1"/>
        <end position="245"/>
    </location>
</feature>
<feature type="region of interest" description="FAD-dependent cmnm(5)s(2)U34 oxidoreductase">
    <location>
        <begin position="270"/>
        <end position="666"/>
    </location>
</feature>
<accession>Q57LX5</accession>